<accession>C0PVI8</accession>
<keyword id="KW-0030">Aminoacyl-tRNA synthetase</keyword>
<keyword id="KW-0067">ATP-binding</keyword>
<keyword id="KW-0963">Cytoplasm</keyword>
<keyword id="KW-0436">Ligase</keyword>
<keyword id="KW-0479">Metal-binding</keyword>
<keyword id="KW-0547">Nucleotide-binding</keyword>
<keyword id="KW-0648">Protein biosynthesis</keyword>
<keyword id="KW-0862">Zinc</keyword>
<reference key="1">
    <citation type="journal article" date="2009" name="PLoS ONE">
        <title>Salmonella paratyphi C: genetic divergence from Salmonella choleraesuis and pathogenic convergence with Salmonella typhi.</title>
        <authorList>
            <person name="Liu W.-Q."/>
            <person name="Feng Y."/>
            <person name="Wang Y."/>
            <person name="Zou Q.-H."/>
            <person name="Chen F."/>
            <person name="Guo J.-T."/>
            <person name="Peng Y.-H."/>
            <person name="Jin Y."/>
            <person name="Li Y.-G."/>
            <person name="Hu S.-N."/>
            <person name="Johnston R.N."/>
            <person name="Liu G.-R."/>
            <person name="Liu S.-L."/>
        </authorList>
    </citation>
    <scope>NUCLEOTIDE SEQUENCE [LARGE SCALE GENOMIC DNA]</scope>
    <source>
        <strain>RKS4594</strain>
    </source>
</reference>
<name>SYC_SALPC</name>
<feature type="chain" id="PRO_1000117304" description="Cysteine--tRNA ligase">
    <location>
        <begin position="1"/>
        <end position="461"/>
    </location>
</feature>
<feature type="short sequence motif" description="'HIGH' region">
    <location>
        <begin position="30"/>
        <end position="40"/>
    </location>
</feature>
<feature type="short sequence motif" description="'KMSKS' region">
    <location>
        <begin position="266"/>
        <end position="270"/>
    </location>
</feature>
<feature type="binding site" evidence="1">
    <location>
        <position position="28"/>
    </location>
    <ligand>
        <name>Zn(2+)</name>
        <dbReference type="ChEBI" id="CHEBI:29105"/>
    </ligand>
</feature>
<feature type="binding site" evidence="1">
    <location>
        <position position="209"/>
    </location>
    <ligand>
        <name>Zn(2+)</name>
        <dbReference type="ChEBI" id="CHEBI:29105"/>
    </ligand>
</feature>
<feature type="binding site" evidence="1">
    <location>
        <position position="234"/>
    </location>
    <ligand>
        <name>Zn(2+)</name>
        <dbReference type="ChEBI" id="CHEBI:29105"/>
    </ligand>
</feature>
<feature type="binding site" evidence="1">
    <location>
        <position position="238"/>
    </location>
    <ligand>
        <name>Zn(2+)</name>
        <dbReference type="ChEBI" id="CHEBI:29105"/>
    </ligand>
</feature>
<feature type="binding site" evidence="1">
    <location>
        <position position="269"/>
    </location>
    <ligand>
        <name>ATP</name>
        <dbReference type="ChEBI" id="CHEBI:30616"/>
    </ligand>
</feature>
<dbReference type="EC" id="6.1.1.16" evidence="1"/>
<dbReference type="EMBL" id="CP000857">
    <property type="protein sequence ID" value="ACN44731.1"/>
    <property type="molecule type" value="Genomic_DNA"/>
</dbReference>
<dbReference type="RefSeq" id="WP_000912376.1">
    <property type="nucleotide sequence ID" value="NC_012125.1"/>
</dbReference>
<dbReference type="SMR" id="C0PVI8"/>
<dbReference type="KEGG" id="sei:SPC_0551"/>
<dbReference type="HOGENOM" id="CLU_013528_0_1_6"/>
<dbReference type="Proteomes" id="UP000001599">
    <property type="component" value="Chromosome"/>
</dbReference>
<dbReference type="GO" id="GO:0005829">
    <property type="term" value="C:cytosol"/>
    <property type="evidence" value="ECO:0007669"/>
    <property type="project" value="TreeGrafter"/>
</dbReference>
<dbReference type="GO" id="GO:0005524">
    <property type="term" value="F:ATP binding"/>
    <property type="evidence" value="ECO:0007669"/>
    <property type="project" value="UniProtKB-UniRule"/>
</dbReference>
<dbReference type="GO" id="GO:0004817">
    <property type="term" value="F:cysteine-tRNA ligase activity"/>
    <property type="evidence" value="ECO:0007669"/>
    <property type="project" value="UniProtKB-UniRule"/>
</dbReference>
<dbReference type="GO" id="GO:0008270">
    <property type="term" value="F:zinc ion binding"/>
    <property type="evidence" value="ECO:0007669"/>
    <property type="project" value="UniProtKB-UniRule"/>
</dbReference>
<dbReference type="GO" id="GO:0006423">
    <property type="term" value="P:cysteinyl-tRNA aminoacylation"/>
    <property type="evidence" value="ECO:0007669"/>
    <property type="project" value="UniProtKB-UniRule"/>
</dbReference>
<dbReference type="CDD" id="cd07963">
    <property type="entry name" value="Anticodon_Ia_Cys"/>
    <property type="match status" value="1"/>
</dbReference>
<dbReference type="CDD" id="cd00672">
    <property type="entry name" value="CysRS_core"/>
    <property type="match status" value="1"/>
</dbReference>
<dbReference type="FunFam" id="1.20.120.1910:FF:000001">
    <property type="entry name" value="Cysteine--tRNA ligase"/>
    <property type="match status" value="1"/>
</dbReference>
<dbReference type="FunFam" id="3.40.50.620:FF:000009">
    <property type="entry name" value="Cysteine--tRNA ligase"/>
    <property type="match status" value="1"/>
</dbReference>
<dbReference type="Gene3D" id="1.20.120.1910">
    <property type="entry name" value="Cysteine-tRNA ligase, C-terminal anti-codon recognition domain"/>
    <property type="match status" value="1"/>
</dbReference>
<dbReference type="Gene3D" id="3.40.50.620">
    <property type="entry name" value="HUPs"/>
    <property type="match status" value="1"/>
</dbReference>
<dbReference type="HAMAP" id="MF_00041">
    <property type="entry name" value="Cys_tRNA_synth"/>
    <property type="match status" value="1"/>
</dbReference>
<dbReference type="InterPro" id="IPR015803">
    <property type="entry name" value="Cys-tRNA-ligase"/>
</dbReference>
<dbReference type="InterPro" id="IPR015273">
    <property type="entry name" value="Cys-tRNA-synt_Ia_DALR"/>
</dbReference>
<dbReference type="InterPro" id="IPR024909">
    <property type="entry name" value="Cys-tRNA/MSH_ligase"/>
</dbReference>
<dbReference type="InterPro" id="IPR056411">
    <property type="entry name" value="CysS_C"/>
</dbReference>
<dbReference type="InterPro" id="IPR014729">
    <property type="entry name" value="Rossmann-like_a/b/a_fold"/>
</dbReference>
<dbReference type="InterPro" id="IPR032678">
    <property type="entry name" value="tRNA-synt_1_cat_dom"/>
</dbReference>
<dbReference type="InterPro" id="IPR009080">
    <property type="entry name" value="tRNAsynth_Ia_anticodon-bd"/>
</dbReference>
<dbReference type="NCBIfam" id="TIGR00435">
    <property type="entry name" value="cysS"/>
    <property type="match status" value="1"/>
</dbReference>
<dbReference type="PANTHER" id="PTHR10890:SF3">
    <property type="entry name" value="CYSTEINE--TRNA LIGASE, CYTOPLASMIC"/>
    <property type="match status" value="1"/>
</dbReference>
<dbReference type="PANTHER" id="PTHR10890">
    <property type="entry name" value="CYSTEINYL-TRNA SYNTHETASE"/>
    <property type="match status" value="1"/>
</dbReference>
<dbReference type="Pfam" id="PF23493">
    <property type="entry name" value="CysS_C"/>
    <property type="match status" value="1"/>
</dbReference>
<dbReference type="Pfam" id="PF09190">
    <property type="entry name" value="DALR_2"/>
    <property type="match status" value="1"/>
</dbReference>
<dbReference type="Pfam" id="PF01406">
    <property type="entry name" value="tRNA-synt_1e"/>
    <property type="match status" value="1"/>
</dbReference>
<dbReference type="PRINTS" id="PR00983">
    <property type="entry name" value="TRNASYNTHCYS"/>
</dbReference>
<dbReference type="SMART" id="SM00840">
    <property type="entry name" value="DALR_2"/>
    <property type="match status" value="1"/>
</dbReference>
<dbReference type="SUPFAM" id="SSF47323">
    <property type="entry name" value="Anticodon-binding domain of a subclass of class I aminoacyl-tRNA synthetases"/>
    <property type="match status" value="1"/>
</dbReference>
<dbReference type="SUPFAM" id="SSF52374">
    <property type="entry name" value="Nucleotidylyl transferase"/>
    <property type="match status" value="1"/>
</dbReference>
<sequence>MLKIFNTLTRQKEEFKPIHAGEVGMYVCGITVYDLCHIGHGRTFVAFDVVARYLRFLGYKLKYVRNITDIDDKIIKRANENGESFVALVDRMIAEMHQDFDALNILRPDSEPRATHHIQEIIELTRTLIEKGHAYVADNGDVMFDVPTDPTYGQLSRQDLEQLQAGARVDVVDVKRNPMDFVLWKMSKEGEPSWPSPWGEGRPGWHIECSAMNCKQLGNHFDIHGGGSDLMFPHHENEIAQSTCAHDGEYVNYWMHSGMVMVDREKMSKSLGNFFTVRDVLKYYDAETVRYFLMSGHYRSQLNYSEENLKQARASLERLYTALRGTDKSAAPAGGEAFEARFVEAMNDDFNTPEAYSVLFDMAREVNRLKGEDMTAANAMASHLRKISGVLGLLEQEPDVFLQSGAQADDGEVAEIEALIQQRLDARKAKDWAAADAARDRLAEMGIILEDGPQGTTWRRK</sequence>
<gene>
    <name evidence="1" type="primary">cysS</name>
    <name type="ordered locus">SPC_0551</name>
</gene>
<comment type="catalytic activity">
    <reaction evidence="1">
        <text>tRNA(Cys) + L-cysteine + ATP = L-cysteinyl-tRNA(Cys) + AMP + diphosphate</text>
        <dbReference type="Rhea" id="RHEA:17773"/>
        <dbReference type="Rhea" id="RHEA-COMP:9661"/>
        <dbReference type="Rhea" id="RHEA-COMP:9679"/>
        <dbReference type="ChEBI" id="CHEBI:30616"/>
        <dbReference type="ChEBI" id="CHEBI:33019"/>
        <dbReference type="ChEBI" id="CHEBI:35235"/>
        <dbReference type="ChEBI" id="CHEBI:78442"/>
        <dbReference type="ChEBI" id="CHEBI:78517"/>
        <dbReference type="ChEBI" id="CHEBI:456215"/>
        <dbReference type="EC" id="6.1.1.16"/>
    </reaction>
</comment>
<comment type="cofactor">
    <cofactor evidence="1">
        <name>Zn(2+)</name>
        <dbReference type="ChEBI" id="CHEBI:29105"/>
    </cofactor>
    <text evidence="1">Binds 1 zinc ion per subunit.</text>
</comment>
<comment type="subunit">
    <text evidence="1">Monomer.</text>
</comment>
<comment type="subcellular location">
    <subcellularLocation>
        <location evidence="1">Cytoplasm</location>
    </subcellularLocation>
</comment>
<comment type="similarity">
    <text evidence="1">Belongs to the class-I aminoacyl-tRNA synthetase family.</text>
</comment>
<evidence type="ECO:0000255" key="1">
    <source>
        <dbReference type="HAMAP-Rule" id="MF_00041"/>
    </source>
</evidence>
<proteinExistence type="inferred from homology"/>
<organism>
    <name type="scientific">Salmonella paratyphi C (strain RKS4594)</name>
    <dbReference type="NCBI Taxonomy" id="476213"/>
    <lineage>
        <taxon>Bacteria</taxon>
        <taxon>Pseudomonadati</taxon>
        <taxon>Pseudomonadota</taxon>
        <taxon>Gammaproteobacteria</taxon>
        <taxon>Enterobacterales</taxon>
        <taxon>Enterobacteriaceae</taxon>
        <taxon>Salmonella</taxon>
    </lineage>
</organism>
<protein>
    <recommendedName>
        <fullName evidence="1">Cysteine--tRNA ligase</fullName>
        <ecNumber evidence="1">6.1.1.16</ecNumber>
    </recommendedName>
    <alternativeName>
        <fullName evidence="1">Cysteinyl-tRNA synthetase</fullName>
        <shortName evidence="1">CysRS</shortName>
    </alternativeName>
</protein>